<evidence type="ECO:0000255" key="1">
    <source>
        <dbReference type="HAMAP-Rule" id="MF_00612"/>
    </source>
</evidence>
<protein>
    <recommendedName>
        <fullName evidence="1">UPF0225 protein YE2246</fullName>
    </recommendedName>
</protein>
<name>Y2246_YERE8</name>
<comment type="similarity">
    <text evidence="1">Belongs to the UPF0225 family.</text>
</comment>
<dbReference type="EMBL" id="AM286415">
    <property type="protein sequence ID" value="CAL12311.1"/>
    <property type="molecule type" value="Genomic_DNA"/>
</dbReference>
<dbReference type="RefSeq" id="WP_011816423.1">
    <property type="nucleotide sequence ID" value="NC_008800.1"/>
</dbReference>
<dbReference type="RefSeq" id="YP_001006480.1">
    <property type="nucleotide sequence ID" value="NC_008800.1"/>
</dbReference>
<dbReference type="SMR" id="A1JQB6"/>
<dbReference type="KEGG" id="yen:YE2246"/>
<dbReference type="PATRIC" id="fig|393305.7.peg.2411"/>
<dbReference type="eggNOG" id="COG3012">
    <property type="taxonomic scope" value="Bacteria"/>
</dbReference>
<dbReference type="HOGENOM" id="CLU_099590_0_0_6"/>
<dbReference type="OrthoDB" id="21421at2"/>
<dbReference type="Proteomes" id="UP000000642">
    <property type="component" value="Chromosome"/>
</dbReference>
<dbReference type="Gene3D" id="3.10.450.50">
    <property type="match status" value="1"/>
</dbReference>
<dbReference type="HAMAP" id="MF_00612">
    <property type="entry name" value="UPF0225"/>
    <property type="match status" value="1"/>
</dbReference>
<dbReference type="InterPro" id="IPR032710">
    <property type="entry name" value="NTF2-like_dom_sf"/>
</dbReference>
<dbReference type="InterPro" id="IPR004027">
    <property type="entry name" value="SEC_C_motif"/>
</dbReference>
<dbReference type="InterPro" id="IPR023006">
    <property type="entry name" value="UPF0225"/>
</dbReference>
<dbReference type="InterPro" id="IPR048469">
    <property type="entry name" value="YchJ-like_M"/>
</dbReference>
<dbReference type="NCBIfam" id="NF002449">
    <property type="entry name" value="PRK01617.1"/>
    <property type="match status" value="1"/>
</dbReference>
<dbReference type="NCBIfam" id="NF002486">
    <property type="entry name" value="PRK01752.1"/>
    <property type="match status" value="1"/>
</dbReference>
<dbReference type="PANTHER" id="PTHR33747:SF1">
    <property type="entry name" value="ADENYLATE CYCLASE-ASSOCIATED CAP C-TERMINAL DOMAIN-CONTAINING PROTEIN"/>
    <property type="match status" value="1"/>
</dbReference>
<dbReference type="PANTHER" id="PTHR33747">
    <property type="entry name" value="UPF0225 PROTEIN SCO1677"/>
    <property type="match status" value="1"/>
</dbReference>
<dbReference type="Pfam" id="PF02810">
    <property type="entry name" value="SEC-C"/>
    <property type="match status" value="2"/>
</dbReference>
<dbReference type="Pfam" id="PF17775">
    <property type="entry name" value="YchJ_M-like"/>
    <property type="match status" value="1"/>
</dbReference>
<dbReference type="SUPFAM" id="SSF54427">
    <property type="entry name" value="NTF2-like"/>
    <property type="match status" value="1"/>
</dbReference>
<dbReference type="SUPFAM" id="SSF103642">
    <property type="entry name" value="Sec-C motif"/>
    <property type="match status" value="1"/>
</dbReference>
<proteinExistence type="inferred from homology"/>
<reference key="1">
    <citation type="journal article" date="2006" name="PLoS Genet.">
        <title>The complete genome sequence and comparative genome analysis of the high pathogenicity Yersinia enterocolitica strain 8081.</title>
        <authorList>
            <person name="Thomson N.R."/>
            <person name="Howard S."/>
            <person name="Wren B.W."/>
            <person name="Holden M.T.G."/>
            <person name="Crossman L."/>
            <person name="Challis G.L."/>
            <person name="Churcher C."/>
            <person name="Mungall K."/>
            <person name="Brooks K."/>
            <person name="Chillingworth T."/>
            <person name="Feltwell T."/>
            <person name="Abdellah Z."/>
            <person name="Hauser H."/>
            <person name="Jagels K."/>
            <person name="Maddison M."/>
            <person name="Moule S."/>
            <person name="Sanders M."/>
            <person name="Whitehead S."/>
            <person name="Quail M.A."/>
            <person name="Dougan G."/>
            <person name="Parkhill J."/>
            <person name="Prentice M.B."/>
        </authorList>
    </citation>
    <scope>NUCLEOTIDE SEQUENCE [LARGE SCALE GENOMIC DNA]</scope>
    <source>
        <strain>NCTC 13174 / 8081</strain>
    </source>
</reference>
<accession>A1JQB6</accession>
<sequence length="154" mass="17668">MSEQCPCGSTLEYQRCCEPYIMGTEIAAKPSILMRSRYSAYVKKNVDYLIATWHPDCNAEQWRDGIIQSFSNTTWQGLTVIAEMAGDHDNEAFVEFIARFKDANSTQVSAMHERSRFLRIKEHWYYIDGIRPSVGRNDTCPCGSGKKYKKCCGR</sequence>
<feature type="chain" id="PRO_1000056749" description="UPF0225 protein YE2246">
    <location>
        <begin position="1"/>
        <end position="154"/>
    </location>
</feature>
<gene>
    <name type="ordered locus">YE2246</name>
</gene>
<organism>
    <name type="scientific">Yersinia enterocolitica serotype O:8 / biotype 1B (strain NCTC 13174 / 8081)</name>
    <dbReference type="NCBI Taxonomy" id="393305"/>
    <lineage>
        <taxon>Bacteria</taxon>
        <taxon>Pseudomonadati</taxon>
        <taxon>Pseudomonadota</taxon>
        <taxon>Gammaproteobacteria</taxon>
        <taxon>Enterobacterales</taxon>
        <taxon>Yersiniaceae</taxon>
        <taxon>Yersinia</taxon>
    </lineage>
</organism>